<dbReference type="EMBL" id="CP000673">
    <property type="protein sequence ID" value="EDK32241.1"/>
    <property type="molecule type" value="Genomic_DNA"/>
</dbReference>
<dbReference type="RefSeq" id="WP_011988767.1">
    <property type="nucleotide sequence ID" value="NC_009706.1"/>
</dbReference>
<dbReference type="SMR" id="A5N4L0"/>
<dbReference type="STRING" id="431943.CKL_0177"/>
<dbReference type="KEGG" id="ckl:CKL_0177"/>
<dbReference type="eggNOG" id="COG0782">
    <property type="taxonomic scope" value="Bacteria"/>
</dbReference>
<dbReference type="HOGENOM" id="CLU_101379_2_1_9"/>
<dbReference type="Proteomes" id="UP000002411">
    <property type="component" value="Chromosome"/>
</dbReference>
<dbReference type="GO" id="GO:0003677">
    <property type="term" value="F:DNA binding"/>
    <property type="evidence" value="ECO:0007669"/>
    <property type="project" value="UniProtKB-UniRule"/>
</dbReference>
<dbReference type="GO" id="GO:0070063">
    <property type="term" value="F:RNA polymerase binding"/>
    <property type="evidence" value="ECO:0007669"/>
    <property type="project" value="InterPro"/>
</dbReference>
<dbReference type="GO" id="GO:0006354">
    <property type="term" value="P:DNA-templated transcription elongation"/>
    <property type="evidence" value="ECO:0007669"/>
    <property type="project" value="TreeGrafter"/>
</dbReference>
<dbReference type="GO" id="GO:0032784">
    <property type="term" value="P:regulation of DNA-templated transcription elongation"/>
    <property type="evidence" value="ECO:0007669"/>
    <property type="project" value="UniProtKB-UniRule"/>
</dbReference>
<dbReference type="FunFam" id="1.10.287.180:FF:000001">
    <property type="entry name" value="Transcription elongation factor GreA"/>
    <property type="match status" value="1"/>
</dbReference>
<dbReference type="FunFam" id="3.10.50.30:FF:000001">
    <property type="entry name" value="Transcription elongation factor GreA"/>
    <property type="match status" value="1"/>
</dbReference>
<dbReference type="Gene3D" id="3.10.50.30">
    <property type="entry name" value="Transcription elongation factor, GreA/GreB, C-terminal domain"/>
    <property type="match status" value="1"/>
</dbReference>
<dbReference type="Gene3D" id="1.10.287.180">
    <property type="entry name" value="Transcription elongation factor, GreA/GreB, N-terminal domain"/>
    <property type="match status" value="1"/>
</dbReference>
<dbReference type="HAMAP" id="MF_00105">
    <property type="entry name" value="GreA_GreB"/>
    <property type="match status" value="1"/>
</dbReference>
<dbReference type="InterPro" id="IPR036953">
    <property type="entry name" value="GreA/GreB_C_sf"/>
</dbReference>
<dbReference type="InterPro" id="IPR018151">
    <property type="entry name" value="TF_GreA/GreB_CS"/>
</dbReference>
<dbReference type="InterPro" id="IPR006359">
    <property type="entry name" value="Tscrpt_elong_fac_GreA"/>
</dbReference>
<dbReference type="InterPro" id="IPR028624">
    <property type="entry name" value="Tscrpt_elong_fac_GreA/B"/>
</dbReference>
<dbReference type="InterPro" id="IPR001437">
    <property type="entry name" value="Tscrpt_elong_fac_GreA/B_C"/>
</dbReference>
<dbReference type="InterPro" id="IPR023459">
    <property type="entry name" value="Tscrpt_elong_fac_GreA/B_fam"/>
</dbReference>
<dbReference type="InterPro" id="IPR022691">
    <property type="entry name" value="Tscrpt_elong_fac_GreA/B_N"/>
</dbReference>
<dbReference type="InterPro" id="IPR036805">
    <property type="entry name" value="Tscrpt_elong_fac_GreA/B_N_sf"/>
</dbReference>
<dbReference type="NCBIfam" id="TIGR01462">
    <property type="entry name" value="greA"/>
    <property type="match status" value="1"/>
</dbReference>
<dbReference type="NCBIfam" id="NF001263">
    <property type="entry name" value="PRK00226.1-4"/>
    <property type="match status" value="1"/>
</dbReference>
<dbReference type="PANTHER" id="PTHR30437">
    <property type="entry name" value="TRANSCRIPTION ELONGATION FACTOR GREA"/>
    <property type="match status" value="1"/>
</dbReference>
<dbReference type="PANTHER" id="PTHR30437:SF4">
    <property type="entry name" value="TRANSCRIPTION ELONGATION FACTOR GREA"/>
    <property type="match status" value="1"/>
</dbReference>
<dbReference type="Pfam" id="PF01272">
    <property type="entry name" value="GreA_GreB"/>
    <property type="match status" value="1"/>
</dbReference>
<dbReference type="Pfam" id="PF03449">
    <property type="entry name" value="GreA_GreB_N"/>
    <property type="match status" value="1"/>
</dbReference>
<dbReference type="PIRSF" id="PIRSF006092">
    <property type="entry name" value="GreA_GreB"/>
    <property type="match status" value="1"/>
</dbReference>
<dbReference type="SUPFAM" id="SSF54534">
    <property type="entry name" value="FKBP-like"/>
    <property type="match status" value="1"/>
</dbReference>
<dbReference type="SUPFAM" id="SSF46557">
    <property type="entry name" value="GreA transcript cleavage protein, N-terminal domain"/>
    <property type="match status" value="1"/>
</dbReference>
<dbReference type="PROSITE" id="PS00829">
    <property type="entry name" value="GREAB_1"/>
    <property type="match status" value="1"/>
</dbReference>
<dbReference type="PROSITE" id="PS00830">
    <property type="entry name" value="GREAB_2"/>
    <property type="match status" value="1"/>
</dbReference>
<comment type="function">
    <text evidence="1">Necessary for efficient RNA polymerase transcription elongation past template-encoded arresting sites. The arresting sites in DNA have the property of trapping a certain fraction of elongating RNA polymerases that pass through, resulting in locked ternary complexes. Cleavage of the nascent transcript by cleavage factors such as GreA or GreB allows the resumption of elongation from the new 3'terminus. GreA releases sequences of 2 to 3 nucleotides.</text>
</comment>
<comment type="similarity">
    <text evidence="1">Belongs to the GreA/GreB family.</text>
</comment>
<gene>
    <name evidence="1" type="primary">greA</name>
    <name type="ordered locus">CKL_0177</name>
</gene>
<protein>
    <recommendedName>
        <fullName evidence="1">Transcription elongation factor GreA</fullName>
    </recommendedName>
    <alternativeName>
        <fullName evidence="1">Transcript cleavage factor GreA</fullName>
    </alternativeName>
</protein>
<reference key="1">
    <citation type="journal article" date="2008" name="Proc. Natl. Acad. Sci. U.S.A.">
        <title>The genome of Clostridium kluyveri, a strict anaerobe with unique metabolic features.</title>
        <authorList>
            <person name="Seedorf H."/>
            <person name="Fricke W.F."/>
            <person name="Veith B."/>
            <person name="Brueggemann H."/>
            <person name="Liesegang H."/>
            <person name="Strittmatter A."/>
            <person name="Miethke M."/>
            <person name="Buckel W."/>
            <person name="Hinderberger J."/>
            <person name="Li F."/>
            <person name="Hagemeier C."/>
            <person name="Thauer R.K."/>
            <person name="Gottschalk G."/>
        </authorList>
    </citation>
    <scope>NUCLEOTIDE SEQUENCE [LARGE SCALE GENOMIC DNA]</scope>
    <source>
        <strain>ATCC 8527 / DSM 555 / NBRC 12016 / NCIMB 10680 / K1</strain>
    </source>
</reference>
<proteinExistence type="inferred from homology"/>
<sequence length="159" mass="17768">MSGLKKYVMTYEGIKKLENELEYLKTVKRKEITEKIKVALSFGDLSENSEYDSAKNEQAFVEGRIVQLENMLKNASMVDEDEVPLDIVGIGSIVKVKDYDLDEEVEYLIVGSAEADPINNKISNESPVGKGLVGKKPGDVIEIQVPDGVSKYKILNIRR</sequence>
<keyword id="KW-0175">Coiled coil</keyword>
<keyword id="KW-0238">DNA-binding</keyword>
<keyword id="KW-1185">Reference proteome</keyword>
<keyword id="KW-0804">Transcription</keyword>
<keyword id="KW-0805">Transcription regulation</keyword>
<name>GREA_CLOK5</name>
<accession>A5N4L0</accession>
<feature type="chain" id="PRO_1000094166" description="Transcription elongation factor GreA">
    <location>
        <begin position="1"/>
        <end position="159"/>
    </location>
</feature>
<feature type="coiled-coil region" evidence="1">
    <location>
        <begin position="14"/>
        <end position="76"/>
    </location>
</feature>
<evidence type="ECO:0000255" key="1">
    <source>
        <dbReference type="HAMAP-Rule" id="MF_00105"/>
    </source>
</evidence>
<organism>
    <name type="scientific">Clostridium kluyveri (strain ATCC 8527 / DSM 555 / NBRC 12016 / NCIMB 10680 / K1)</name>
    <dbReference type="NCBI Taxonomy" id="431943"/>
    <lineage>
        <taxon>Bacteria</taxon>
        <taxon>Bacillati</taxon>
        <taxon>Bacillota</taxon>
        <taxon>Clostridia</taxon>
        <taxon>Eubacteriales</taxon>
        <taxon>Clostridiaceae</taxon>
        <taxon>Clostridium</taxon>
    </lineage>
</organism>